<protein>
    <recommendedName>
        <fullName>Nuclear hormone receptor family member nhr-40</fullName>
    </recommendedName>
</protein>
<comment type="function">
    <text evidence="3 4 6">Orphan nuclear receptor (Probable). Plays a role in morphogenesis and elongation during embryonic and larval development (PubMed:16920335). Plays a role in muscle formation and motility (PubMed:16920335, PubMed:18616929).</text>
</comment>
<comment type="subcellular location">
    <subcellularLocation>
        <location evidence="1">Nucleus</location>
    </subcellularLocation>
</comment>
<comment type="alternative products">
    <event type="alternative splicing"/>
    <isoform>
        <id>Q22127-1</id>
        <name evidence="8">c</name>
        <name evidence="5">d</name>
        <sequence type="displayed"/>
    </isoform>
    <isoform>
        <id>Q22127-3</id>
        <name evidence="7">b</name>
        <sequence type="described" ref="VSP_003726"/>
    </isoform>
</comment>
<comment type="tissue specificity">
    <text evidence="3">Isoform b: Expressed in body wall muscle cells, pharyngeal muscles, rectal gland cells, vulval and uterine muscles and neurons in the head and ventral nerve cord (PubMed:16920335). Isoform c: Expressed in body wall muscle cells, neurons in the head, nerve ring, ventral and dorsal nerve cords and epidermal cells in the tail (PubMed:16920335).</text>
</comment>
<comment type="developmental stage">
    <text evidence="3">Expressed throughout development (PubMed:16920335). First expressed in embryos from the 1.5-fold stage (PubMed:16920335). Highly expressed during the L2 stage of larval development (PubMed:16920335).</text>
</comment>
<comment type="disruption phenotype">
    <text evidence="3">RNAi-mediated knockdown results in arrest due to elongation and morphogenesis defects at the embryonic or larval stages in 30% of offspring (PubMed:16920335). Furthermore, embryos have highly disorganized epithelial cells (PubMed:16920335). RNAi-mediated knockdown in adults results in mis-localized or missing body wall muscle cells (PubMed:16920335).</text>
</comment>
<comment type="similarity">
    <text evidence="6">Belongs to the nuclear hormone receptor family.</text>
</comment>
<organism>
    <name type="scientific">Caenorhabditis elegans</name>
    <dbReference type="NCBI Taxonomy" id="6239"/>
    <lineage>
        <taxon>Eukaryota</taxon>
        <taxon>Metazoa</taxon>
        <taxon>Ecdysozoa</taxon>
        <taxon>Nematoda</taxon>
        <taxon>Chromadorea</taxon>
        <taxon>Rhabditida</taxon>
        <taxon>Rhabditina</taxon>
        <taxon>Rhabditomorpha</taxon>
        <taxon>Rhabditoidea</taxon>
        <taxon>Rhabditidae</taxon>
        <taxon>Peloderinae</taxon>
        <taxon>Caenorhabditis</taxon>
    </lineage>
</organism>
<accession>Q22127</accession>
<accession>Q8MPY4</accession>
<accession>Q9GTH6</accession>
<evidence type="ECO:0000255" key="1">
    <source>
        <dbReference type="PROSITE-ProRule" id="PRU00407"/>
    </source>
</evidence>
<evidence type="ECO:0000255" key="2">
    <source>
        <dbReference type="PROSITE-ProRule" id="PRU01189"/>
    </source>
</evidence>
<evidence type="ECO:0000269" key="3">
    <source>
    </source>
</evidence>
<evidence type="ECO:0000269" key="4">
    <source>
    </source>
</evidence>
<evidence type="ECO:0000303" key="5">
    <source>
    </source>
</evidence>
<evidence type="ECO:0000305" key="6"/>
<evidence type="ECO:0000312" key="7">
    <source>
        <dbReference type="WormBase" id="T03G6.2b"/>
    </source>
</evidence>
<evidence type="ECO:0000312" key="8">
    <source>
        <dbReference type="WormBase" id="T03G6.2c"/>
    </source>
</evidence>
<proteinExistence type="evidence at transcript level"/>
<dbReference type="EMBL" id="AF273782">
    <property type="protein sequence ID" value="AAG15131.1"/>
    <property type="molecule type" value="mRNA"/>
</dbReference>
<dbReference type="EMBL" id="BX284606">
    <property type="protein sequence ID" value="CCD71834.1"/>
    <property type="molecule type" value="Genomic_DNA"/>
</dbReference>
<dbReference type="EMBL" id="BX284606">
    <property type="protein sequence ID" value="CCD71835.1"/>
    <property type="molecule type" value="Genomic_DNA"/>
</dbReference>
<dbReference type="RefSeq" id="NP_001024873.1">
    <molecule id="Q22127-3"/>
    <property type="nucleotide sequence ID" value="NM_001029702.5"/>
</dbReference>
<dbReference type="RefSeq" id="NP_001024874.1">
    <property type="nucleotide sequence ID" value="NM_001029703.3"/>
</dbReference>
<dbReference type="RefSeq" id="NP_001362027.1">
    <molecule id="Q22127-1"/>
    <property type="nucleotide sequence ID" value="NM_001374979.2"/>
</dbReference>
<dbReference type="RefSeq" id="NP_741729.1">
    <property type="nucleotide sequence ID" value="NM_171636.5"/>
</dbReference>
<dbReference type="SMR" id="Q22127"/>
<dbReference type="FunCoup" id="Q22127">
    <property type="interactions" value="4"/>
</dbReference>
<dbReference type="STRING" id="6239.T03G6.2c.1"/>
<dbReference type="PaxDb" id="6239-T03G6.2c"/>
<dbReference type="PeptideAtlas" id="Q22127"/>
<dbReference type="EnsemblMetazoa" id="T03G6.2b.1">
    <molecule id="Q22127-3"/>
    <property type="protein sequence ID" value="T03G6.2b.1"/>
    <property type="gene ID" value="WBGene00003630"/>
</dbReference>
<dbReference type="EnsemblMetazoa" id="T03G6.2c.1">
    <molecule id="Q22127-1"/>
    <property type="protein sequence ID" value="T03G6.2c.1"/>
    <property type="gene ID" value="WBGene00003630"/>
</dbReference>
<dbReference type="GeneID" id="180560"/>
<dbReference type="KEGG" id="cel:CELE_T03G6.2"/>
<dbReference type="UCSC" id="T03G6.2b">
    <molecule id="Q22127-1"/>
    <property type="organism name" value="c. elegans"/>
</dbReference>
<dbReference type="AGR" id="WB:WBGene00003630"/>
<dbReference type="CTD" id="180560"/>
<dbReference type="WormBase" id="T03G6.2b">
    <molecule id="Q22127-3"/>
    <property type="protein sequence ID" value="CE31228"/>
    <property type="gene ID" value="WBGene00003630"/>
    <property type="gene designation" value="nhr-40"/>
</dbReference>
<dbReference type="WormBase" id="T03G6.2c">
    <molecule id="Q22127-1"/>
    <property type="protein sequence ID" value="CE53506"/>
    <property type="gene ID" value="WBGene00003630"/>
    <property type="gene designation" value="nhr-40"/>
</dbReference>
<dbReference type="eggNOG" id="KOG3575">
    <property type="taxonomic scope" value="Eukaryota"/>
</dbReference>
<dbReference type="InParanoid" id="Q22127"/>
<dbReference type="OrthoDB" id="6355676at2759"/>
<dbReference type="PhylomeDB" id="Q22127"/>
<dbReference type="Reactome" id="R-CEL-383280">
    <property type="pathway name" value="Nuclear Receptor transcription pathway"/>
</dbReference>
<dbReference type="PRO" id="PR:Q22127"/>
<dbReference type="Proteomes" id="UP000001940">
    <property type="component" value="Chromosome X"/>
</dbReference>
<dbReference type="Bgee" id="WBGene00003630">
    <property type="expression patterns" value="Expressed in larva and 3 other cell types or tissues"/>
</dbReference>
<dbReference type="GO" id="GO:0005634">
    <property type="term" value="C:nucleus"/>
    <property type="evidence" value="ECO:0007669"/>
    <property type="project" value="UniProtKB-SubCell"/>
</dbReference>
<dbReference type="GO" id="GO:0004879">
    <property type="term" value="F:nuclear receptor activity"/>
    <property type="evidence" value="ECO:0000318"/>
    <property type="project" value="GO_Central"/>
</dbReference>
<dbReference type="GO" id="GO:0000978">
    <property type="term" value="F:RNA polymerase II cis-regulatory region sequence-specific DNA binding"/>
    <property type="evidence" value="ECO:0000318"/>
    <property type="project" value="GO_Central"/>
</dbReference>
<dbReference type="GO" id="GO:0008270">
    <property type="term" value="F:zinc ion binding"/>
    <property type="evidence" value="ECO:0007669"/>
    <property type="project" value="UniProtKB-KW"/>
</dbReference>
<dbReference type="GO" id="GO:0030154">
    <property type="term" value="P:cell differentiation"/>
    <property type="evidence" value="ECO:0000318"/>
    <property type="project" value="GO_Central"/>
</dbReference>
<dbReference type="GO" id="GO:0006357">
    <property type="term" value="P:regulation of transcription by RNA polymerase II"/>
    <property type="evidence" value="ECO:0000318"/>
    <property type="project" value="GO_Central"/>
</dbReference>
<dbReference type="CDD" id="cd06960">
    <property type="entry name" value="NR_DBD_HNF4A"/>
    <property type="match status" value="1"/>
</dbReference>
<dbReference type="FunFam" id="3.30.50.10:FF:000030">
    <property type="entry name" value="Nuclear Hormone Receptor family"/>
    <property type="match status" value="1"/>
</dbReference>
<dbReference type="Gene3D" id="3.30.50.10">
    <property type="entry name" value="Erythroid Transcription Factor GATA-1, subunit A"/>
    <property type="match status" value="1"/>
</dbReference>
<dbReference type="Gene3D" id="1.10.565.10">
    <property type="entry name" value="Retinoid X Receptor"/>
    <property type="match status" value="1"/>
</dbReference>
<dbReference type="InterPro" id="IPR049636">
    <property type="entry name" value="HNF4-like_DBD"/>
</dbReference>
<dbReference type="InterPro" id="IPR035500">
    <property type="entry name" value="NHR-like_dom_sf"/>
</dbReference>
<dbReference type="InterPro" id="IPR000536">
    <property type="entry name" value="Nucl_hrmn_rcpt_lig-bd"/>
</dbReference>
<dbReference type="InterPro" id="IPR050274">
    <property type="entry name" value="Nuclear_hormone_rcpt_NR2"/>
</dbReference>
<dbReference type="InterPro" id="IPR001628">
    <property type="entry name" value="Znf_hrmn_rcpt"/>
</dbReference>
<dbReference type="InterPro" id="IPR013088">
    <property type="entry name" value="Znf_NHR/GATA"/>
</dbReference>
<dbReference type="PANTHER" id="PTHR24083">
    <property type="entry name" value="NUCLEAR HORMONE RECEPTOR"/>
    <property type="match status" value="1"/>
</dbReference>
<dbReference type="Pfam" id="PF00104">
    <property type="entry name" value="Hormone_recep"/>
    <property type="match status" value="1"/>
</dbReference>
<dbReference type="Pfam" id="PF00105">
    <property type="entry name" value="zf-C4"/>
    <property type="match status" value="1"/>
</dbReference>
<dbReference type="PRINTS" id="PR00047">
    <property type="entry name" value="STROIDFINGER"/>
</dbReference>
<dbReference type="SMART" id="SM00430">
    <property type="entry name" value="HOLI"/>
    <property type="match status" value="1"/>
</dbReference>
<dbReference type="SMART" id="SM00399">
    <property type="entry name" value="ZnF_C4"/>
    <property type="match status" value="1"/>
</dbReference>
<dbReference type="SUPFAM" id="SSF57716">
    <property type="entry name" value="Glucocorticoid receptor-like (DNA-binding domain)"/>
    <property type="match status" value="1"/>
</dbReference>
<dbReference type="SUPFAM" id="SSF48508">
    <property type="entry name" value="Nuclear receptor ligand-binding domain"/>
    <property type="match status" value="1"/>
</dbReference>
<dbReference type="PROSITE" id="PS51843">
    <property type="entry name" value="NR_LBD"/>
    <property type="match status" value="1"/>
</dbReference>
<dbReference type="PROSITE" id="PS00031">
    <property type="entry name" value="NUCLEAR_REC_DBD_1"/>
    <property type="match status" value="1"/>
</dbReference>
<dbReference type="PROSITE" id="PS51030">
    <property type="entry name" value="NUCLEAR_REC_DBD_2"/>
    <property type="match status" value="1"/>
</dbReference>
<gene>
    <name evidence="8" type="primary">nhr-40</name>
    <name evidence="8" type="ORF">T03G6.2</name>
</gene>
<reference key="1">
    <citation type="journal article" date="2005" name="J. Mol. Evol.">
        <title>Explosive lineage-specific expansion of the orphan nuclear receptor HNF4 in nematodes.</title>
        <authorList>
            <person name="Robinson-Rechavi M."/>
            <person name="Maina C.V."/>
            <person name="Gissendanner C.R."/>
            <person name="Laudet V."/>
            <person name="Sluder A."/>
        </authorList>
    </citation>
    <scope>NUCLEOTIDE SEQUENCE [MRNA] (ISOFORM B)</scope>
</reference>
<reference key="2">
    <citation type="journal article" date="1998" name="Science">
        <title>Genome sequence of the nematode C. elegans: a platform for investigating biology.</title>
        <authorList>
            <consortium name="The C. elegans sequencing consortium"/>
        </authorList>
    </citation>
    <scope>NUCLEOTIDE SEQUENCE [LARGE SCALE GENOMIC DNA]</scope>
    <source>
        <strain>Bristol N2</strain>
    </source>
</reference>
<reference key="3">
    <citation type="journal article" date="2006" name="Mech. Dev.">
        <title>NHR-40, a Caenorhabditis elegans supplementary nuclear receptor, regulates embryonic and early larval development.</title>
        <authorList>
            <person name="Brozova E."/>
            <person name="Simeckova K."/>
            <person name="Kostrouch Z."/>
            <person name="Rall J.E."/>
            <person name="Kostrouchova M."/>
        </authorList>
    </citation>
    <scope>FUNCTION</scope>
    <scope>TISSUE SPECIFICITY</scope>
    <scope>DEVELOPMENTAL STAGE</scope>
    <scope>DISRUPTION PHENOTYPE</scope>
</reference>
<reference key="4">
    <citation type="journal article" date="2008" name="Biochem. Biophys. Res. Commun.">
        <title>Proteomic analysis uncovers a metabolic phenotype in C. elegans after nhr-40 reduction of function.</title>
        <authorList>
            <person name="Pohludka M."/>
            <person name="Simeckova K."/>
            <person name="Vohanka J."/>
            <person name="Yilma P."/>
            <person name="Novak P."/>
            <person name="Krause M.W."/>
            <person name="Kostrouchova M."/>
            <person name="Kostrouch Z."/>
        </authorList>
    </citation>
    <scope>FUNCTION</scope>
</reference>
<feature type="chain" id="PRO_0000053779" description="Nuclear hormone receptor family member nhr-40">
    <location>
        <begin position="1"/>
        <end position="450"/>
    </location>
</feature>
<feature type="domain" description="NR LBD" evidence="2">
    <location>
        <begin position="173"/>
        <end position="450"/>
    </location>
</feature>
<feature type="DNA-binding region" description="Nuclear receptor" evidence="1">
    <location>
        <begin position="28"/>
        <end position="103"/>
    </location>
</feature>
<feature type="zinc finger region" description="NR C4-type" evidence="1">
    <location>
        <begin position="31"/>
        <end position="51"/>
    </location>
</feature>
<feature type="zinc finger region" description="NR C4-type" evidence="1">
    <location>
        <begin position="67"/>
        <end position="91"/>
    </location>
</feature>
<feature type="splice variant" id="VSP_003726" description="In isoform b." evidence="6">
    <original>MLVPPVSMIMYHELPSIKNK</original>
    <variation>MPNN</variation>
    <location>
        <begin position="1"/>
        <end position="20"/>
    </location>
</feature>
<feature type="sequence conflict" description="In Ref. 1; AAG15131." evidence="6" ref="1">
    <original>S</original>
    <variation>SSFLFF</variation>
    <location>
        <position position="209"/>
    </location>
</feature>
<name>NHR40_CAEEL</name>
<keyword id="KW-0025">Alternative splicing</keyword>
<keyword id="KW-0238">DNA-binding</keyword>
<keyword id="KW-0479">Metal-binding</keyword>
<keyword id="KW-0539">Nucleus</keyword>
<keyword id="KW-0675">Receptor</keyword>
<keyword id="KW-1185">Reference proteome</keyword>
<keyword id="KW-0804">Transcription</keyword>
<keyword id="KW-0805">Transcription regulation</keyword>
<keyword id="KW-0862">Zinc</keyword>
<keyword id="KW-0863">Zinc-finger</keyword>
<sequence>MLVPPVSMIMYHELPSIKNKKREKIPEGTLCVVCSDFASGIHYSVASCNGCKTFFRRALVNKQTFTCQFSGDCVVGKSVRCVCRSCRLKKCFDMGMDPKAIQHDRDKIRYTKALKKKREEEKRLKEMVIKEDIGSPQSIASDTYINTSTPSSSTMINILENDHHSYDPEAQNDVKAVIEDLLRLESRVKSLRNSYRFESQVSATSCMYSSCLLDDITYMAENTHENEGTIEPFECSVEKLREWFVRDLSLMLEWGKCLPIMERLLLNDKLALMKAFAPIFPLIQLAFYTRNEFECDIVIKLEPDCTPKPIPERLNYPDGSFIEKGNKPANTWEEMHTMLIDGCYKMMRQLKIKESTFVLYKMLLFHNPDADGLSSLGKKTIENERMRLLTQLFSYLSTERGKEAQTIFSNLLMMSATLSKTASFIKRVFDFNHIFNRTNDLIDQLIIVGL</sequence>